<gene>
    <name evidence="1" type="primary">hscA</name>
    <name type="ordered locus">RC0262</name>
</gene>
<feature type="chain" id="PRO_0000078643" description="Chaperone protein HscA homolog">
    <location>
        <begin position="1"/>
        <end position="595"/>
    </location>
</feature>
<keyword id="KW-0067">ATP-binding</keyword>
<keyword id="KW-0143">Chaperone</keyword>
<keyword id="KW-0547">Nucleotide-binding</keyword>
<comment type="function">
    <text evidence="1">Chaperone involved in the maturation of iron-sulfur cluster-containing proteins. Has a low intrinsic ATPase activity which is markedly stimulated by HscB.</text>
</comment>
<comment type="similarity">
    <text evidence="1">Belongs to the heat shock protein 70 family.</text>
</comment>
<accession>Q92J07</accession>
<evidence type="ECO:0000255" key="1">
    <source>
        <dbReference type="HAMAP-Rule" id="MF_00679"/>
    </source>
</evidence>
<proteinExistence type="inferred from homology"/>
<dbReference type="EMBL" id="AE006914">
    <property type="protein sequence ID" value="AAL02800.1"/>
    <property type="molecule type" value="Genomic_DNA"/>
</dbReference>
<dbReference type="PIR" id="F97732">
    <property type="entry name" value="F97732"/>
</dbReference>
<dbReference type="RefSeq" id="WP_010976923.1">
    <property type="nucleotide sequence ID" value="NC_003103.1"/>
</dbReference>
<dbReference type="SMR" id="Q92J07"/>
<dbReference type="GeneID" id="927912"/>
<dbReference type="KEGG" id="rco:RC0262"/>
<dbReference type="PATRIC" id="fig|272944.4.peg.300"/>
<dbReference type="HOGENOM" id="CLU_005965_2_4_5"/>
<dbReference type="Proteomes" id="UP000000816">
    <property type="component" value="Chromosome"/>
</dbReference>
<dbReference type="GO" id="GO:0005524">
    <property type="term" value="F:ATP binding"/>
    <property type="evidence" value="ECO:0007669"/>
    <property type="project" value="UniProtKB-KW"/>
</dbReference>
<dbReference type="GO" id="GO:0016887">
    <property type="term" value="F:ATP hydrolysis activity"/>
    <property type="evidence" value="ECO:0007669"/>
    <property type="project" value="UniProtKB-UniRule"/>
</dbReference>
<dbReference type="GO" id="GO:0140662">
    <property type="term" value="F:ATP-dependent protein folding chaperone"/>
    <property type="evidence" value="ECO:0007669"/>
    <property type="project" value="InterPro"/>
</dbReference>
<dbReference type="GO" id="GO:0051082">
    <property type="term" value="F:unfolded protein binding"/>
    <property type="evidence" value="ECO:0007669"/>
    <property type="project" value="InterPro"/>
</dbReference>
<dbReference type="GO" id="GO:0016226">
    <property type="term" value="P:iron-sulfur cluster assembly"/>
    <property type="evidence" value="ECO:0007669"/>
    <property type="project" value="InterPro"/>
</dbReference>
<dbReference type="Gene3D" id="1.20.1270.10">
    <property type="match status" value="1"/>
</dbReference>
<dbReference type="Gene3D" id="3.30.420.40">
    <property type="match status" value="2"/>
</dbReference>
<dbReference type="Gene3D" id="3.90.640.10">
    <property type="entry name" value="Actin, Chain A, domain 4"/>
    <property type="match status" value="1"/>
</dbReference>
<dbReference type="Gene3D" id="2.60.34.10">
    <property type="entry name" value="Substrate Binding Domain Of DNAk, Chain A, domain 1"/>
    <property type="match status" value="1"/>
</dbReference>
<dbReference type="HAMAP" id="MF_00679">
    <property type="entry name" value="HscA"/>
    <property type="match status" value="1"/>
</dbReference>
<dbReference type="InterPro" id="IPR043129">
    <property type="entry name" value="ATPase_NBD"/>
</dbReference>
<dbReference type="InterPro" id="IPR018181">
    <property type="entry name" value="Heat_shock_70_CS"/>
</dbReference>
<dbReference type="InterPro" id="IPR029048">
    <property type="entry name" value="HSP70_C_sf"/>
</dbReference>
<dbReference type="InterPro" id="IPR029047">
    <property type="entry name" value="HSP70_peptide-bd_sf"/>
</dbReference>
<dbReference type="InterPro" id="IPR013126">
    <property type="entry name" value="Hsp_70_fam"/>
</dbReference>
<dbReference type="InterPro" id="IPR010236">
    <property type="entry name" value="ISC_FeS_clus_asmbl_HscA"/>
</dbReference>
<dbReference type="NCBIfam" id="NF002399">
    <property type="entry name" value="PRK01433.1"/>
    <property type="match status" value="1"/>
</dbReference>
<dbReference type="PANTHER" id="PTHR19375">
    <property type="entry name" value="HEAT SHOCK PROTEIN 70KDA"/>
    <property type="match status" value="1"/>
</dbReference>
<dbReference type="Pfam" id="PF00012">
    <property type="entry name" value="HSP70"/>
    <property type="match status" value="1"/>
</dbReference>
<dbReference type="PRINTS" id="PR00301">
    <property type="entry name" value="HEATSHOCK70"/>
</dbReference>
<dbReference type="SUPFAM" id="SSF53067">
    <property type="entry name" value="Actin-like ATPase domain"/>
    <property type="match status" value="2"/>
</dbReference>
<dbReference type="SUPFAM" id="SSF100934">
    <property type="entry name" value="Heat shock protein 70kD (HSP70), C-terminal subdomain"/>
    <property type="match status" value="1"/>
</dbReference>
<dbReference type="SUPFAM" id="SSF100920">
    <property type="entry name" value="Heat shock protein 70kD (HSP70), peptide-binding domain"/>
    <property type="match status" value="1"/>
</dbReference>
<dbReference type="PROSITE" id="PS00329">
    <property type="entry name" value="HSP70_2"/>
    <property type="match status" value="1"/>
</dbReference>
<dbReference type="PROSITE" id="PS01036">
    <property type="entry name" value="HSP70_3"/>
    <property type="match status" value="1"/>
</dbReference>
<protein>
    <recommendedName>
        <fullName evidence="1">Chaperone protein HscA homolog</fullName>
    </recommendedName>
</protein>
<sequence>MQIIEIREPEQADFKQERQIAVGIDFGTTNSLIAIAANRQVKVIKSIDDKELIPTTIDFTSNNFTIGNNKGLRSIKRLFGKTLKEILNTPALFSLVKDYLDVNSSELKLNFANKQLRVPEIAAEIFIYLKNQAEEQLKTNLTKAVITVPAHFNDAARGEVMLAAKIAGFEVLRLIAEPTAAAYAYGLNKNQKGCYLVYDLGGGTFDVSILNIQEGIFQVIATNGDNMLGGNDIDVVITQYLCNKFDLPNSIDTLQLAKKAKETLTYKDSFNNDNVSINKQILEQLILPLVERTINIAQECLEQAGNPNIDGVILVGGATRIPLIKDELYKAFKIDILSDIDPDKAVVWGAALQAENLIAPHTNSLLIDVAPLSLGMELYGGIVEKIIMHNTPIPISVVKEFTTYVDNQTGIQFHILQGEREMAADCRSLARFELKGLPPMKAGYIRAEVTFSIDADGILSVSAYEKISNTSHAIEVKPNHGIDKTEIDIMLENAYKNAKIDYTTRLLQEAVIEAEALIFSIERAIAELTILSSESEISIINSLLDNIKEAVHARDWILINNSIKEFKSKIKKSIDTKFNIIINDLLKGKNINQIK</sequence>
<reference key="1">
    <citation type="journal article" date="2001" name="Science">
        <title>Mechanisms of evolution in Rickettsia conorii and R. prowazekii.</title>
        <authorList>
            <person name="Ogata H."/>
            <person name="Audic S."/>
            <person name="Renesto-Audiffren P."/>
            <person name="Fournier P.-E."/>
            <person name="Barbe V."/>
            <person name="Samson D."/>
            <person name="Roux V."/>
            <person name="Cossart P."/>
            <person name="Weissenbach J."/>
            <person name="Claverie J.-M."/>
            <person name="Raoult D."/>
        </authorList>
    </citation>
    <scope>NUCLEOTIDE SEQUENCE [LARGE SCALE GENOMIC DNA]</scope>
    <source>
        <strain>ATCC VR-613 / Malish 7</strain>
    </source>
</reference>
<name>HSCA_RICCN</name>
<organism>
    <name type="scientific">Rickettsia conorii (strain ATCC VR-613 / Malish 7)</name>
    <dbReference type="NCBI Taxonomy" id="272944"/>
    <lineage>
        <taxon>Bacteria</taxon>
        <taxon>Pseudomonadati</taxon>
        <taxon>Pseudomonadota</taxon>
        <taxon>Alphaproteobacteria</taxon>
        <taxon>Rickettsiales</taxon>
        <taxon>Rickettsiaceae</taxon>
        <taxon>Rickettsieae</taxon>
        <taxon>Rickettsia</taxon>
        <taxon>spotted fever group</taxon>
    </lineage>
</organism>